<protein>
    <recommendedName>
        <fullName evidence="1">Chromatin protein Cren7 2</fullName>
    </recommendedName>
</protein>
<comment type="function">
    <text evidence="1">A chromatin protein, binds double-stranded DNA without sequence specificity. Constrains negative DNA supercoils.</text>
</comment>
<comment type="subunit">
    <text evidence="1">Monomer.</text>
</comment>
<comment type="subcellular location">
    <subcellularLocation>
        <location evidence="1">Chromosome</location>
    </subcellularLocation>
    <subcellularLocation>
        <location evidence="1">Cytoplasm</location>
    </subcellularLocation>
</comment>
<comment type="PTM">
    <text evidence="1">Methylated at multiple sites, to varying extents.</text>
</comment>
<comment type="similarity">
    <text evidence="1">Belongs to the Cren7 family.</text>
</comment>
<sequence length="62" mass="6959">MACEKPVKVRDPTTGKEVELVPIKVWQLAPRGRKGVKIGLFKSPETGKYFRAKVPDDYPICS</sequence>
<proteinExistence type="inferred from homology"/>
<accession>A2BLV6</accession>
<name>CRN72_HYPBU</name>
<reference key="1">
    <citation type="journal article" date="2007" name="Archaea">
        <title>The genome of Hyperthermus butylicus: a sulfur-reducing, peptide fermenting, neutrophilic Crenarchaeote growing up to 108 degrees C.</title>
        <authorList>
            <person name="Bruegger K."/>
            <person name="Chen L."/>
            <person name="Stark M."/>
            <person name="Zibat A."/>
            <person name="Redder P."/>
            <person name="Ruepp A."/>
            <person name="Awayez M."/>
            <person name="She Q."/>
            <person name="Garrett R.A."/>
            <person name="Klenk H.-P."/>
        </authorList>
    </citation>
    <scope>NUCLEOTIDE SEQUENCE [LARGE SCALE GENOMIC DNA]</scope>
    <source>
        <strain>DSM 5456 / JCM 9403 / PLM1-5</strain>
    </source>
</reference>
<dbReference type="EMBL" id="CP000493">
    <property type="protein sequence ID" value="ABM80967.1"/>
    <property type="molecule type" value="Genomic_DNA"/>
</dbReference>
<dbReference type="RefSeq" id="WP_011822285.1">
    <property type="nucleotide sequence ID" value="NC_008818.1"/>
</dbReference>
<dbReference type="SMR" id="A2BLV6"/>
<dbReference type="EnsemblBacteria" id="ABM80967">
    <property type="protein sequence ID" value="ABM80967"/>
    <property type="gene ID" value="Hbut_1128"/>
</dbReference>
<dbReference type="KEGG" id="hbu:Hbut_1128"/>
<dbReference type="eggNOG" id="arCOG04114">
    <property type="taxonomic scope" value="Archaea"/>
</dbReference>
<dbReference type="HOGENOM" id="CLU_2911298_0_0_2"/>
<dbReference type="OrthoDB" id="38142at2157"/>
<dbReference type="Proteomes" id="UP000002593">
    <property type="component" value="Chromosome"/>
</dbReference>
<dbReference type="GO" id="GO:0005694">
    <property type="term" value="C:chromosome"/>
    <property type="evidence" value="ECO:0007669"/>
    <property type="project" value="UniProtKB-SubCell"/>
</dbReference>
<dbReference type="GO" id="GO:0005737">
    <property type="term" value="C:cytoplasm"/>
    <property type="evidence" value="ECO:0007669"/>
    <property type="project" value="UniProtKB-SubCell"/>
</dbReference>
<dbReference type="GO" id="GO:0003690">
    <property type="term" value="F:double-stranded DNA binding"/>
    <property type="evidence" value="ECO:0007669"/>
    <property type="project" value="UniProtKB-UniRule"/>
</dbReference>
<dbReference type="Gene3D" id="2.30.30.610">
    <property type="entry name" value="Chromatin protein Cren7"/>
    <property type="match status" value="1"/>
</dbReference>
<dbReference type="HAMAP" id="MF_01387">
    <property type="entry name" value="Chromatin_Cren7"/>
    <property type="match status" value="1"/>
</dbReference>
<dbReference type="InterPro" id="IPR038647">
    <property type="entry name" value="Cren7_sf"/>
</dbReference>
<dbReference type="InterPro" id="IPR020906">
    <property type="entry name" value="dsDNA-bd_Cren7"/>
</dbReference>
<dbReference type="Pfam" id="PF11520">
    <property type="entry name" value="Cren7"/>
    <property type="match status" value="1"/>
</dbReference>
<gene>
    <name type="primary">cren7-2</name>
    <name type="ordered locus">Hbut_1128</name>
</gene>
<feature type="chain" id="PRO_0000345168" description="Chromatin protein Cren7 2">
    <location>
        <begin position="1"/>
        <end position="62"/>
    </location>
</feature>
<evidence type="ECO:0000255" key="1">
    <source>
        <dbReference type="HAMAP-Rule" id="MF_01387"/>
    </source>
</evidence>
<keyword id="KW-0158">Chromosome</keyword>
<keyword id="KW-0963">Cytoplasm</keyword>
<keyword id="KW-0238">DNA-binding</keyword>
<keyword id="KW-0488">Methylation</keyword>
<keyword id="KW-1185">Reference proteome</keyword>
<organism>
    <name type="scientific">Hyperthermus butylicus (strain DSM 5456 / JCM 9403 / PLM1-5)</name>
    <dbReference type="NCBI Taxonomy" id="415426"/>
    <lineage>
        <taxon>Archaea</taxon>
        <taxon>Thermoproteota</taxon>
        <taxon>Thermoprotei</taxon>
        <taxon>Desulfurococcales</taxon>
        <taxon>Pyrodictiaceae</taxon>
        <taxon>Hyperthermus</taxon>
    </lineage>
</organism>